<accession>Q42597</accession>
<accession>Q8LEF0</accession>
<accession>Q9FIW2</accession>
<name>THN22_ARATH</name>
<evidence type="ECO:0000250" key="1">
    <source>
        <dbReference type="UniProtKB" id="P08943"/>
    </source>
</evidence>
<evidence type="ECO:0000255" key="2"/>
<evidence type="ECO:0000269" key="3">
    <source>
    </source>
</evidence>
<evidence type="ECO:0000305" key="4"/>
<sequence>MEGKTVISSLLIMSLVLAQIQVEAKICCPTKDDRSVYFVCMLSVSSQFYCLLKSKCKNTSQTICPPGYTNDILENSGDAVNEYCKLGCASSVCGALTTLQNFDTSKVLSEAVEQCTKACSSVCTGGSTAAVKSA</sequence>
<reference key="1">
    <citation type="journal article" date="1995" name="Plant Physiol.">
        <title>An Arabidopsis thaliana thionin gene is inducible via a signal transduction pathway different from that for pathogenesis-related proteins.</title>
        <authorList>
            <person name="Epple P."/>
            <person name="Apel K."/>
            <person name="Bohlmann H."/>
        </authorList>
    </citation>
    <scope>NUCLEOTIDE SEQUENCE [MRNA]</scope>
    <scope>TISSUE SPECIFICITY</scope>
    <source>
        <strain>cv. Landsberg erecta</strain>
    </source>
</reference>
<reference key="2">
    <citation type="journal article" date="1998" name="DNA Res.">
        <title>Structural analysis of Arabidopsis thaliana chromosome 5. VIII. Sequence features of the regions of 1,081,958 bp covered by seventeen physically assigned P1 and TAC clones.</title>
        <authorList>
            <person name="Asamizu E."/>
            <person name="Sato S."/>
            <person name="Kaneko T."/>
            <person name="Nakamura Y."/>
            <person name="Kotani H."/>
            <person name="Miyajima N."/>
            <person name="Tabata S."/>
        </authorList>
    </citation>
    <scope>NUCLEOTIDE SEQUENCE [LARGE SCALE GENOMIC DNA]</scope>
    <source>
        <strain>cv. Columbia</strain>
    </source>
</reference>
<reference key="3">
    <citation type="journal article" date="2017" name="Plant J.">
        <title>Araport11: a complete reannotation of the Arabidopsis thaliana reference genome.</title>
        <authorList>
            <person name="Cheng C.Y."/>
            <person name="Krishnakumar V."/>
            <person name="Chan A.P."/>
            <person name="Thibaud-Nissen F."/>
            <person name="Schobel S."/>
            <person name="Town C.D."/>
        </authorList>
    </citation>
    <scope>GENOME REANNOTATION</scope>
    <source>
        <strain>cv. Columbia</strain>
    </source>
</reference>
<reference key="4">
    <citation type="submission" date="2002-03" db="EMBL/GenBank/DDBJ databases">
        <title>Full-length cDNA from Arabidopsis thaliana.</title>
        <authorList>
            <person name="Brover V.V."/>
            <person name="Troukhan M.E."/>
            <person name="Alexandrov N.A."/>
            <person name="Lu Y.-P."/>
            <person name="Flavell R.B."/>
            <person name="Feldmann K.A."/>
        </authorList>
    </citation>
    <scope>NUCLEOTIDE SEQUENCE [LARGE SCALE MRNA]</scope>
</reference>
<feature type="signal peptide" evidence="2">
    <location>
        <begin position="1"/>
        <end position="24"/>
    </location>
</feature>
<feature type="chain" id="PRO_0000034141" description="Thionin-2.2">
    <location>
        <begin position="25"/>
        <end position="70"/>
    </location>
</feature>
<feature type="propeptide" id="PRO_0000459422" description="Acidic domain" evidence="4">
    <location>
        <begin position="71"/>
        <end position="134"/>
    </location>
</feature>
<feature type="disulfide bond" evidence="1">
    <location>
        <begin position="27"/>
        <end position="64"/>
    </location>
</feature>
<feature type="disulfide bond" evidence="1">
    <location>
        <begin position="28"/>
        <end position="56"/>
    </location>
</feature>
<feature type="disulfide bond" evidence="1">
    <location>
        <begin position="40"/>
        <end position="50"/>
    </location>
</feature>
<feature type="sequence conflict" description="In Ref. 4; AAM62681." evidence="4" ref="4">
    <original>M</original>
    <variation>I</variation>
    <location>
        <position position="13"/>
    </location>
</feature>
<feature type="sequence conflict" description="In Ref. 1; AAC41679 and 4; AAM62681." evidence="4" ref="1 4">
    <original>T</original>
    <variation>A</variation>
    <location>
        <position position="104"/>
    </location>
</feature>
<keyword id="KW-1015">Disulfide bond</keyword>
<keyword id="KW-0611">Plant defense</keyword>
<keyword id="KW-1185">Reference proteome</keyword>
<keyword id="KW-0964">Secreted</keyword>
<keyword id="KW-0732">Signal</keyword>
<keyword id="KW-0800">Toxin</keyword>
<protein>
    <recommendedName>
        <fullName>Thionin-2.2</fullName>
    </recommendedName>
</protein>
<organism>
    <name type="scientific">Arabidopsis thaliana</name>
    <name type="common">Mouse-ear cress</name>
    <dbReference type="NCBI Taxonomy" id="3702"/>
    <lineage>
        <taxon>Eukaryota</taxon>
        <taxon>Viridiplantae</taxon>
        <taxon>Streptophyta</taxon>
        <taxon>Embryophyta</taxon>
        <taxon>Tracheophyta</taxon>
        <taxon>Spermatophyta</taxon>
        <taxon>Magnoliopsida</taxon>
        <taxon>eudicotyledons</taxon>
        <taxon>Gunneridae</taxon>
        <taxon>Pentapetalae</taxon>
        <taxon>rosids</taxon>
        <taxon>malvids</taxon>
        <taxon>Brassicales</taxon>
        <taxon>Brassicaceae</taxon>
        <taxon>Camelineae</taxon>
        <taxon>Arabidopsis</taxon>
    </lineage>
</organism>
<dbReference type="EMBL" id="L41245">
    <property type="protein sequence ID" value="AAC41679.1"/>
    <property type="molecule type" value="mRNA"/>
</dbReference>
<dbReference type="EMBL" id="AB016877">
    <property type="protein sequence ID" value="BAB11632.1"/>
    <property type="molecule type" value="Genomic_DNA"/>
</dbReference>
<dbReference type="EMBL" id="CP002688">
    <property type="protein sequence ID" value="AED94125.1"/>
    <property type="molecule type" value="Genomic_DNA"/>
</dbReference>
<dbReference type="EMBL" id="AY085455">
    <property type="protein sequence ID" value="AAM62681.1"/>
    <property type="molecule type" value="mRNA"/>
</dbReference>
<dbReference type="RefSeq" id="NP_198507.1">
    <property type="nucleotide sequence ID" value="NM_123049.3"/>
</dbReference>
<dbReference type="SMR" id="Q42597"/>
<dbReference type="STRING" id="3702.Q42597"/>
<dbReference type="PaxDb" id="3702-AT5G36910.1"/>
<dbReference type="EnsemblPlants" id="AT5G36910.1">
    <property type="protein sequence ID" value="AT5G36910.1"/>
    <property type="gene ID" value="AT5G36910"/>
</dbReference>
<dbReference type="GeneID" id="833659"/>
<dbReference type="Gramene" id="AT5G36910.1">
    <property type="protein sequence ID" value="AT5G36910.1"/>
    <property type="gene ID" value="AT5G36910"/>
</dbReference>
<dbReference type="KEGG" id="ath:AT5G36910"/>
<dbReference type="Araport" id="AT5G36910"/>
<dbReference type="TAIR" id="AT5G36910">
    <property type="gene designation" value="THI2.2"/>
</dbReference>
<dbReference type="eggNOG" id="ENOG502SUEZ">
    <property type="taxonomic scope" value="Eukaryota"/>
</dbReference>
<dbReference type="HOGENOM" id="CLU_132328_0_0_1"/>
<dbReference type="InParanoid" id="Q42597"/>
<dbReference type="OMA" id="STMNTCA"/>
<dbReference type="PhylomeDB" id="Q42597"/>
<dbReference type="PRO" id="PR:Q42597"/>
<dbReference type="Proteomes" id="UP000006548">
    <property type="component" value="Chromosome 5"/>
</dbReference>
<dbReference type="ExpressionAtlas" id="Q42597">
    <property type="expression patterns" value="baseline and differential"/>
</dbReference>
<dbReference type="GO" id="GO:0005576">
    <property type="term" value="C:extracellular region"/>
    <property type="evidence" value="ECO:0007669"/>
    <property type="project" value="UniProtKB-SubCell"/>
</dbReference>
<dbReference type="GO" id="GO:0090729">
    <property type="term" value="F:toxin activity"/>
    <property type="evidence" value="ECO:0007669"/>
    <property type="project" value="UniProtKB-KW"/>
</dbReference>
<dbReference type="GO" id="GO:0006952">
    <property type="term" value="P:defense response"/>
    <property type="evidence" value="ECO:0000250"/>
    <property type="project" value="TAIR"/>
</dbReference>
<dbReference type="FunFam" id="3.30.1350.10:FF:000001">
    <property type="entry name" value="Hellethionin-D"/>
    <property type="match status" value="1"/>
</dbReference>
<dbReference type="Gene3D" id="3.30.1350.10">
    <property type="entry name" value="Thionin-like"/>
    <property type="match status" value="1"/>
</dbReference>
<dbReference type="InterPro" id="IPR001010">
    <property type="entry name" value="Thionin"/>
</dbReference>
<dbReference type="InterPro" id="IPR036391">
    <property type="entry name" value="Thionin-like_sf"/>
</dbReference>
<dbReference type="PANTHER" id="PTHR33920">
    <property type="entry name" value="THIONIN-2.1-RELATED"/>
    <property type="match status" value="1"/>
</dbReference>
<dbReference type="PANTHER" id="PTHR33920:SF2">
    <property type="entry name" value="THIONIN-2.1-RELATED"/>
    <property type="match status" value="1"/>
</dbReference>
<dbReference type="Pfam" id="PF00321">
    <property type="entry name" value="Thionin"/>
    <property type="match status" value="1"/>
</dbReference>
<dbReference type="SUPFAM" id="SSF57429">
    <property type="entry name" value="Crambin-like"/>
    <property type="match status" value="1"/>
</dbReference>
<dbReference type="PROSITE" id="PS00271">
    <property type="entry name" value="THIONIN"/>
    <property type="match status" value="1"/>
</dbReference>
<gene>
    <name type="primary">THI2.2</name>
    <name type="ordered locus">At5g36910</name>
    <name type="ORF">MLF18.5</name>
</gene>
<comment type="function">
    <text>Thionins are small plant proteins which are toxic to animal cells. They seem to exert their toxic effect at the level of the cell membrane. Their precise function is not known.</text>
</comment>
<comment type="subcellular location">
    <subcellularLocation>
        <location evidence="4">Secreted</location>
    </subcellularLocation>
</comment>
<comment type="tissue specificity">
    <text evidence="3">Low basal expression in seedlings. Also detected in rosette leaves.</text>
</comment>
<comment type="similarity">
    <text evidence="4">Belongs to the plant thionin (TC 1.C.44) family.</text>
</comment>
<proteinExistence type="evidence at transcript level"/>